<keyword id="KW-0903">Direct protein sequencing</keyword>
<keyword id="KW-1015">Disulfide bond</keyword>
<keyword id="KW-0872">Ion channel impairing toxin</keyword>
<keyword id="KW-1028">Ionotropic glutamate receptor inhibitor</keyword>
<keyword id="KW-0960">Knottin</keyword>
<keyword id="KW-0528">Neurotoxin</keyword>
<keyword id="KW-0629">Postsynaptic neurotoxin</keyword>
<keyword id="KW-0964">Secreted</keyword>
<keyword id="KW-0800">Toxin</keyword>
<keyword id="KW-0738">Voltage-gated sodium channel impairing toxin</keyword>
<reference key="1">
    <citation type="submission" date="2007-07" db="UniProtKB">
        <authorList>
            <person name="Borges M.H."/>
            <person name="Oliveira C.F.B."/>
            <person name="Goncalves J.M."/>
            <person name="Rates B."/>
            <person name="Santos D.M."/>
            <person name="Pimenta A.M.C."/>
            <person name="Cordeiro M.N."/>
            <person name="Richardson M."/>
        </authorList>
    </citation>
    <scope>PROTEIN SEQUENCE</scope>
    <scope>SUBCELLULAR LOCATION</scope>
    <scope>MASS SPECTROMETRY</scope>
    <source>
        <tissue>Venom</tissue>
    </source>
</reference>
<sequence length="23" mass="2364">GKCGEINGSCDECYGGSVTCDCY</sequence>
<feature type="chain" id="PRO_0000302115" description="U1-ctenitoxin-Co1a" evidence="5">
    <location>
        <begin position="1"/>
        <end position="23" status="greater than"/>
    </location>
</feature>
<feature type="disulfide bond" evidence="4">
    <location>
        <begin position="3"/>
        <end status="unknown"/>
    </location>
</feature>
<feature type="disulfide bond" evidence="4">
    <location>
        <begin position="10"/>
        <end position="20"/>
    </location>
</feature>
<feature type="disulfide bond" evidence="4">
    <location>
        <begin position="13"/>
        <end status="unknown"/>
    </location>
</feature>
<feature type="disulfide bond" evidence="4">
    <location>
        <begin position="22"/>
        <end status="unknown"/>
    </location>
</feature>
<feature type="non-terminal residue" evidence="5">
    <location>
        <position position="23"/>
    </location>
</feature>
<accession>P85266</accession>
<name>TX35D_CTEON</name>
<evidence type="ECO:0000250" key="1">
    <source>
        <dbReference type="UniProtKB" id="P59367"/>
    </source>
</evidence>
<evidence type="ECO:0000269" key="2">
    <source ref="1"/>
</evidence>
<evidence type="ECO:0000303" key="3">
    <source ref="1"/>
</evidence>
<evidence type="ECO:0000305" key="4"/>
<evidence type="ECO:0000305" key="5">
    <source ref="1"/>
</evidence>
<dbReference type="ArachnoServer" id="AS000308">
    <property type="toxin name" value="U1-ctenitoxin-Co1a"/>
</dbReference>
<dbReference type="GO" id="GO:0005576">
    <property type="term" value="C:extracellular region"/>
    <property type="evidence" value="ECO:0007669"/>
    <property type="project" value="UniProtKB-SubCell"/>
</dbReference>
<dbReference type="GO" id="GO:0035792">
    <property type="term" value="C:host cell postsynaptic membrane"/>
    <property type="evidence" value="ECO:0007669"/>
    <property type="project" value="UniProtKB-KW"/>
</dbReference>
<dbReference type="GO" id="GO:0017080">
    <property type="term" value="F:sodium channel regulator activity"/>
    <property type="evidence" value="ECO:0007669"/>
    <property type="project" value="UniProtKB-KW"/>
</dbReference>
<dbReference type="GO" id="GO:0090729">
    <property type="term" value="F:toxin activity"/>
    <property type="evidence" value="ECO:0007669"/>
    <property type="project" value="UniProtKB-KW"/>
</dbReference>
<organism>
    <name type="scientific">Ctenus ornatus</name>
    <name type="common">Brazilian spider</name>
    <name type="synonym">Oligoctenus ornatus</name>
    <dbReference type="NCBI Taxonomy" id="406443"/>
    <lineage>
        <taxon>Eukaryota</taxon>
        <taxon>Metazoa</taxon>
        <taxon>Ecdysozoa</taxon>
        <taxon>Arthropoda</taxon>
        <taxon>Chelicerata</taxon>
        <taxon>Arachnida</taxon>
        <taxon>Araneae</taxon>
        <taxon>Araneomorphae</taxon>
        <taxon>Entelegynae</taxon>
        <taxon>Lycosoidea</taxon>
        <taxon>Ctenidae</taxon>
        <taxon>Oligoctenus</taxon>
    </lineage>
</organism>
<protein>
    <recommendedName>
        <fullName evidence="4">U1-ctenitoxin-Co1a</fullName>
        <shortName evidence="4">U1-CNTX-Co1a</shortName>
    </recommendedName>
    <alternativeName>
        <fullName evidence="3">Neurotoxin Oc F17-11</fullName>
    </alternativeName>
</protein>
<proteinExistence type="evidence at protein level"/>
<comment type="function">
    <text evidence="1">Insecticidal neurotoxin that reversibly inhibits the N-methyl-D-aspartate (NMDA)-subtype of ionotropic glutamate receptor (GRIN) and inhibits inactivation of insect sodium channels (Nav). In vivo, is highly toxic to insects.</text>
</comment>
<comment type="subcellular location">
    <subcellularLocation>
        <location evidence="2">Secreted</location>
    </subcellularLocation>
</comment>
<comment type="tissue specificity">
    <text evidence="5">Expressed by the venom gland.</text>
</comment>
<comment type="domain">
    <text evidence="4">The presence of a 'disulfide through disulfide knot' structurally defines this protein as a knottin.</text>
</comment>
<comment type="mass spectrometry" mass="4833.1" error="0.18" method="Electrospray" evidence="2"/>
<comment type="similarity">
    <text evidence="4">Belongs to the neurotoxin 03 (Tx2) family. 05 subfamily.</text>
</comment>